<keyword id="KW-0456">Lyase</keyword>
<sequence length="156" mass="16958">MTQSQHSQSPREALAERIVEAKTRKNLTFEQINEGTGLSVAFTTAALLGQHPLPADAARVVAAKLDLDDDAQRLLQTIPVRGSIPGGVPTDPTIYRFYEIVQVYGSTLKALIHEQFGDGIVSAINFKLDIKKVDDPEGGSRAVITLDGKYLPTKPF</sequence>
<feature type="chain" id="PRO_1000051467" description="Cyanate hydratase">
    <location>
        <begin position="1"/>
        <end position="156"/>
    </location>
</feature>
<feature type="active site" evidence="1">
    <location>
        <position position="96"/>
    </location>
</feature>
<feature type="active site" evidence="1">
    <location>
        <position position="99"/>
    </location>
</feature>
<feature type="active site" evidence="1">
    <location>
        <position position="122"/>
    </location>
</feature>
<accession>A3MRF1</accession>
<gene>
    <name evidence="1" type="primary">cynS</name>
    <name type="ordered locus">BMA10247_3321</name>
</gene>
<reference key="1">
    <citation type="journal article" date="2010" name="Genome Biol. Evol.">
        <title>Continuing evolution of Burkholderia mallei through genome reduction and large-scale rearrangements.</title>
        <authorList>
            <person name="Losada L."/>
            <person name="Ronning C.M."/>
            <person name="DeShazer D."/>
            <person name="Woods D."/>
            <person name="Fedorova N."/>
            <person name="Kim H.S."/>
            <person name="Shabalina S.A."/>
            <person name="Pearson T.R."/>
            <person name="Brinkac L."/>
            <person name="Tan P."/>
            <person name="Nandi T."/>
            <person name="Crabtree J."/>
            <person name="Badger J."/>
            <person name="Beckstrom-Sternberg S."/>
            <person name="Saqib M."/>
            <person name="Schutzer S.E."/>
            <person name="Keim P."/>
            <person name="Nierman W.C."/>
        </authorList>
    </citation>
    <scope>NUCLEOTIDE SEQUENCE [LARGE SCALE GENOMIC DNA]</scope>
    <source>
        <strain>NCTC 10247</strain>
    </source>
</reference>
<organism>
    <name type="scientific">Burkholderia mallei (strain NCTC 10247)</name>
    <dbReference type="NCBI Taxonomy" id="320389"/>
    <lineage>
        <taxon>Bacteria</taxon>
        <taxon>Pseudomonadati</taxon>
        <taxon>Pseudomonadota</taxon>
        <taxon>Betaproteobacteria</taxon>
        <taxon>Burkholderiales</taxon>
        <taxon>Burkholderiaceae</taxon>
        <taxon>Burkholderia</taxon>
        <taxon>pseudomallei group</taxon>
    </lineage>
</organism>
<dbReference type="EC" id="4.2.1.104" evidence="1"/>
<dbReference type="EMBL" id="CP000548">
    <property type="protein sequence ID" value="ABO04316.1"/>
    <property type="molecule type" value="Genomic_DNA"/>
</dbReference>
<dbReference type="RefSeq" id="WP_004194284.1">
    <property type="nucleotide sequence ID" value="NZ_CP007802.1"/>
</dbReference>
<dbReference type="SMR" id="A3MRF1"/>
<dbReference type="GeneID" id="93061548"/>
<dbReference type="KEGG" id="bmaz:BM44_53"/>
<dbReference type="KEGG" id="bmn:BMA10247_3321"/>
<dbReference type="PATRIC" id="fig|320389.8.peg.57"/>
<dbReference type="GO" id="GO:0008824">
    <property type="term" value="F:cyanate hydratase activity"/>
    <property type="evidence" value="ECO:0007669"/>
    <property type="project" value="UniProtKB-UniRule"/>
</dbReference>
<dbReference type="GO" id="GO:0003677">
    <property type="term" value="F:DNA binding"/>
    <property type="evidence" value="ECO:0007669"/>
    <property type="project" value="InterPro"/>
</dbReference>
<dbReference type="GO" id="GO:0009439">
    <property type="term" value="P:cyanate metabolic process"/>
    <property type="evidence" value="ECO:0007669"/>
    <property type="project" value="UniProtKB-UniRule"/>
</dbReference>
<dbReference type="CDD" id="cd00559">
    <property type="entry name" value="Cyanase_C"/>
    <property type="match status" value="1"/>
</dbReference>
<dbReference type="Gene3D" id="3.30.1160.10">
    <property type="entry name" value="Cyanate lyase, C-terminal domain"/>
    <property type="match status" value="1"/>
</dbReference>
<dbReference type="Gene3D" id="1.10.260.40">
    <property type="entry name" value="lambda repressor-like DNA-binding domains"/>
    <property type="match status" value="1"/>
</dbReference>
<dbReference type="HAMAP" id="MF_00535">
    <property type="entry name" value="Cyanate_hydrat"/>
    <property type="match status" value="1"/>
</dbReference>
<dbReference type="InterPro" id="IPR008076">
    <property type="entry name" value="Cyanase"/>
</dbReference>
<dbReference type="InterPro" id="IPR003712">
    <property type="entry name" value="Cyanate_lyase_C"/>
</dbReference>
<dbReference type="InterPro" id="IPR036581">
    <property type="entry name" value="Cyanate_lyase_C_sf"/>
</dbReference>
<dbReference type="InterPro" id="IPR048564">
    <property type="entry name" value="CYNS_N"/>
</dbReference>
<dbReference type="InterPro" id="IPR010982">
    <property type="entry name" value="Lambda_DNA-bd_dom_sf"/>
</dbReference>
<dbReference type="NCBIfam" id="TIGR00673">
    <property type="entry name" value="cynS"/>
    <property type="match status" value="1"/>
</dbReference>
<dbReference type="NCBIfam" id="NF002773">
    <property type="entry name" value="PRK02866.1"/>
    <property type="match status" value="1"/>
</dbReference>
<dbReference type="PANTHER" id="PTHR34186">
    <property type="entry name" value="CYANATE HYDRATASE"/>
    <property type="match status" value="1"/>
</dbReference>
<dbReference type="PANTHER" id="PTHR34186:SF2">
    <property type="entry name" value="CYANATE HYDRATASE"/>
    <property type="match status" value="1"/>
</dbReference>
<dbReference type="Pfam" id="PF02560">
    <property type="entry name" value="Cyanate_lyase"/>
    <property type="match status" value="1"/>
</dbReference>
<dbReference type="Pfam" id="PF21291">
    <property type="entry name" value="CYNS_N"/>
    <property type="match status" value="1"/>
</dbReference>
<dbReference type="PIRSF" id="PIRSF001263">
    <property type="entry name" value="Cyanate_hydratas"/>
    <property type="match status" value="1"/>
</dbReference>
<dbReference type="PRINTS" id="PR01693">
    <property type="entry name" value="CYANASE"/>
</dbReference>
<dbReference type="SMART" id="SM01116">
    <property type="entry name" value="Cyanate_lyase"/>
    <property type="match status" value="1"/>
</dbReference>
<dbReference type="SUPFAM" id="SSF55234">
    <property type="entry name" value="Cyanase C-terminal domain"/>
    <property type="match status" value="1"/>
</dbReference>
<dbReference type="SUPFAM" id="SSF47413">
    <property type="entry name" value="lambda repressor-like DNA-binding domains"/>
    <property type="match status" value="1"/>
</dbReference>
<name>CYNS_BURM7</name>
<evidence type="ECO:0000255" key="1">
    <source>
        <dbReference type="HAMAP-Rule" id="MF_00535"/>
    </source>
</evidence>
<protein>
    <recommendedName>
        <fullName evidence="1">Cyanate hydratase</fullName>
        <shortName evidence="1">Cyanase</shortName>
        <ecNumber evidence="1">4.2.1.104</ecNumber>
    </recommendedName>
    <alternativeName>
        <fullName evidence="1">Cyanate hydrolase</fullName>
    </alternativeName>
    <alternativeName>
        <fullName evidence="1">Cyanate lyase</fullName>
    </alternativeName>
</protein>
<proteinExistence type="inferred from homology"/>
<comment type="function">
    <text evidence="1">Catalyzes the reaction of cyanate with bicarbonate to produce ammonia and carbon dioxide.</text>
</comment>
<comment type="catalytic activity">
    <reaction evidence="1">
        <text>cyanate + hydrogencarbonate + 3 H(+) = NH4(+) + 2 CO2</text>
        <dbReference type="Rhea" id="RHEA:11120"/>
        <dbReference type="ChEBI" id="CHEBI:15378"/>
        <dbReference type="ChEBI" id="CHEBI:16526"/>
        <dbReference type="ChEBI" id="CHEBI:17544"/>
        <dbReference type="ChEBI" id="CHEBI:28938"/>
        <dbReference type="ChEBI" id="CHEBI:29195"/>
        <dbReference type="EC" id="4.2.1.104"/>
    </reaction>
</comment>
<comment type="similarity">
    <text evidence="1">Belongs to the cyanase family.</text>
</comment>